<organism>
    <name type="scientific">Tetramorium bicarinatum</name>
    <name type="common">Tramp ant</name>
    <dbReference type="NCBI Taxonomy" id="219812"/>
    <lineage>
        <taxon>Eukaryota</taxon>
        <taxon>Metazoa</taxon>
        <taxon>Ecdysozoa</taxon>
        <taxon>Arthropoda</taxon>
        <taxon>Hexapoda</taxon>
        <taxon>Insecta</taxon>
        <taxon>Pterygota</taxon>
        <taxon>Neoptera</taxon>
        <taxon>Endopterygota</taxon>
        <taxon>Hymenoptera</taxon>
        <taxon>Apocrita</taxon>
        <taxon>Aculeata</taxon>
        <taxon>Formicoidea</taxon>
        <taxon>Formicidae</taxon>
        <taxon>Myrmicinae</taxon>
        <taxon>Tetramorium</taxon>
    </lineage>
</organism>
<protein>
    <recommendedName>
        <fullName evidence="4">Waprin-like protein</fullName>
    </recommendedName>
</protein>
<feature type="signal peptide" evidence="2">
    <location>
        <begin position="1"/>
        <end position="21"/>
    </location>
</feature>
<feature type="chain" id="PRO_0000458225" description="Waprin-like protein">
    <location>
        <begin position="22"/>
        <end position="115"/>
    </location>
</feature>
<feature type="domain" description="WAP" evidence="3">
    <location>
        <begin position="23"/>
        <end position="69"/>
    </location>
</feature>
<feature type="disulfide bond" evidence="3">
    <location>
        <begin position="30"/>
        <end position="56"/>
    </location>
</feature>
<feature type="disulfide bond" evidence="3">
    <location>
        <begin position="39"/>
        <end position="60"/>
    </location>
</feature>
<feature type="disulfide bond" evidence="3">
    <location>
        <begin position="43"/>
        <end position="55"/>
    </location>
</feature>
<feature type="disulfide bond" evidence="3">
    <location>
        <begin position="49"/>
        <end position="65"/>
    </location>
</feature>
<proteinExistence type="inferred from homology"/>
<keyword id="KW-0044">Antibiotic</keyword>
<keyword id="KW-0929">Antimicrobial</keyword>
<keyword id="KW-1015">Disulfide bond</keyword>
<keyword id="KW-0295">Fungicide</keyword>
<keyword id="KW-0646">Protease inhibitor</keyword>
<keyword id="KW-0964">Secreted</keyword>
<keyword id="KW-0722">Serine protease inhibitor</keyword>
<keyword id="KW-0732">Signal</keyword>
<dbReference type="SMR" id="P0DQZ3"/>
<dbReference type="GO" id="GO:0005576">
    <property type="term" value="C:extracellular region"/>
    <property type="evidence" value="ECO:0007669"/>
    <property type="project" value="UniProtKB-SubCell"/>
</dbReference>
<dbReference type="GO" id="GO:0004867">
    <property type="term" value="F:serine-type endopeptidase inhibitor activity"/>
    <property type="evidence" value="ECO:0007669"/>
    <property type="project" value="UniProtKB-KW"/>
</dbReference>
<dbReference type="GO" id="GO:0042742">
    <property type="term" value="P:defense response to bacterium"/>
    <property type="evidence" value="ECO:0007669"/>
    <property type="project" value="UniProtKB-KW"/>
</dbReference>
<dbReference type="GO" id="GO:0050832">
    <property type="term" value="P:defense response to fungus"/>
    <property type="evidence" value="ECO:0007669"/>
    <property type="project" value="UniProtKB-KW"/>
</dbReference>
<dbReference type="GO" id="GO:0031640">
    <property type="term" value="P:killing of cells of another organism"/>
    <property type="evidence" value="ECO:0007669"/>
    <property type="project" value="UniProtKB-KW"/>
</dbReference>
<dbReference type="Gene3D" id="4.10.75.10">
    <property type="entry name" value="Elafin-like"/>
    <property type="match status" value="1"/>
</dbReference>
<dbReference type="InterPro" id="IPR036645">
    <property type="entry name" value="Elafin-like_sf"/>
</dbReference>
<dbReference type="InterPro" id="IPR008197">
    <property type="entry name" value="WAP_dom"/>
</dbReference>
<dbReference type="Pfam" id="PF00095">
    <property type="entry name" value="WAP"/>
    <property type="match status" value="1"/>
</dbReference>
<dbReference type="SMART" id="SM00217">
    <property type="entry name" value="WAP"/>
    <property type="match status" value="1"/>
</dbReference>
<dbReference type="SUPFAM" id="SSF57256">
    <property type="entry name" value="Elafin-like"/>
    <property type="match status" value="1"/>
</dbReference>
<dbReference type="PROSITE" id="PS51390">
    <property type="entry name" value="WAP"/>
    <property type="match status" value="1"/>
</dbReference>
<name>WAP_TETBN</name>
<accession>P0DQZ3</accession>
<sequence length="115" mass="12281">MNRSLLAFAIVLVLLVAGTSSQLFNKSGNCPMRNTVTSCTPRCIGDGECSSNQKCCPNKCGTTSCANSSPLNTGSDGGYKGSSNQQAVYCNGVKCAAYEKCQYDRNTRRDKCTRV</sequence>
<comment type="function">
    <text evidence="1">Antimicrobial peptides with activity against Gram-positive and Gram-negative bacteria as well as fungi. Recognizes carbohydrates in the microbial cell walls, and induces structural damage to them. Also inhibits microbial serine proteases, as well as mammalian elastases. Carbohydrates that are recognized are LPS, mannan, peptidoglycan, and N-acetl-D-glucosamine.</text>
</comment>
<comment type="subcellular location">
    <subcellularLocation>
        <location evidence="1">Secreted</location>
    </subcellularLocation>
</comment>
<comment type="tissue specificity">
    <text evidence="1">Expressed by the venom gland.</text>
</comment>
<comment type="similarity">
    <text evidence="5">Belongs to the venom waprin family. Cys-rich waprin subfamily.</text>
</comment>
<reference key="1">
    <citation type="journal article" date="2014" name="BMC Genomics">
        <title>De Novo sequencing and transcriptome analysis for Tetramorium bicarinatum: a comprehensive venom gland transcriptome analysis from an ant species.</title>
        <authorList>
            <person name="Bouzid W."/>
            <person name="Verdenaud M."/>
            <person name="Klopp C."/>
            <person name="Ducancel F."/>
            <person name="Noirot C."/>
            <person name="Vetillard A."/>
        </authorList>
    </citation>
    <scope>NUCLEOTIDE SEQUENCE [MRNA]</scope>
    <source>
        <tissue>Venom gland</tissue>
    </source>
</reference>
<evidence type="ECO:0000250" key="1">
    <source>
        <dbReference type="UniProtKB" id="A0A7M7H308"/>
    </source>
</evidence>
<evidence type="ECO:0000255" key="2"/>
<evidence type="ECO:0000255" key="3">
    <source>
        <dbReference type="PROSITE-ProRule" id="PRU00722"/>
    </source>
</evidence>
<evidence type="ECO:0000303" key="4">
    <source>
    </source>
</evidence>
<evidence type="ECO:0000305" key="5"/>